<proteinExistence type="inferred from homology"/>
<gene>
    <name evidence="1" type="primary">hemC</name>
    <name type="ordered locus">Sbal_4000</name>
</gene>
<sequence>MSENRIRIATRKSPLAMWQAEFVKAELERIHPGIVVELLPMSTKGDVILDTPLAKVGGKGLFVKELEVAMLDDLADIAVHSMKDVPVDFPEGLGLEVICEREDPRDAFVSNLYKSISELPLGATVGTSSLRRQCQIRASRPDLIIKDLRGNVGTRLAKLDNGEYDAIILAAAGLIRLKLSERIASFISAEESLPANGQGAVGIECRINDERVKALLAPLEHLETRYRVLAERAMNTRLEGGCQVPIGAFAEIDGDEMTLRGLVGNPDGSEIIEGVITGPKTEATQLGVALAEELLSKGAKTILDAVYAKA</sequence>
<evidence type="ECO:0000255" key="1">
    <source>
        <dbReference type="HAMAP-Rule" id="MF_00260"/>
    </source>
</evidence>
<dbReference type="EC" id="2.5.1.61" evidence="1"/>
<dbReference type="EMBL" id="CP000563">
    <property type="protein sequence ID" value="ABN63467.1"/>
    <property type="molecule type" value="Genomic_DNA"/>
</dbReference>
<dbReference type="RefSeq" id="WP_011848051.1">
    <property type="nucleotide sequence ID" value="NC_009052.1"/>
</dbReference>
<dbReference type="SMR" id="A3D9Q4"/>
<dbReference type="STRING" id="325240.Sbal_4000"/>
<dbReference type="KEGG" id="sbl:Sbal_4000"/>
<dbReference type="HOGENOM" id="CLU_019704_0_2_6"/>
<dbReference type="OrthoDB" id="9810298at2"/>
<dbReference type="UniPathway" id="UPA00251">
    <property type="reaction ID" value="UER00319"/>
</dbReference>
<dbReference type="Proteomes" id="UP000001557">
    <property type="component" value="Chromosome"/>
</dbReference>
<dbReference type="GO" id="GO:0005737">
    <property type="term" value="C:cytoplasm"/>
    <property type="evidence" value="ECO:0007669"/>
    <property type="project" value="TreeGrafter"/>
</dbReference>
<dbReference type="GO" id="GO:0004418">
    <property type="term" value="F:hydroxymethylbilane synthase activity"/>
    <property type="evidence" value="ECO:0007669"/>
    <property type="project" value="UniProtKB-UniRule"/>
</dbReference>
<dbReference type="GO" id="GO:0006782">
    <property type="term" value="P:protoporphyrinogen IX biosynthetic process"/>
    <property type="evidence" value="ECO:0007669"/>
    <property type="project" value="UniProtKB-UniRule"/>
</dbReference>
<dbReference type="CDD" id="cd13646">
    <property type="entry name" value="PBP2_EcHMBS_like"/>
    <property type="match status" value="1"/>
</dbReference>
<dbReference type="FunFam" id="3.30.160.40:FF:000002">
    <property type="entry name" value="Porphobilinogen deaminase"/>
    <property type="match status" value="1"/>
</dbReference>
<dbReference type="FunFam" id="3.40.190.10:FF:000004">
    <property type="entry name" value="Porphobilinogen deaminase"/>
    <property type="match status" value="1"/>
</dbReference>
<dbReference type="FunFam" id="3.40.190.10:FF:000005">
    <property type="entry name" value="Porphobilinogen deaminase"/>
    <property type="match status" value="1"/>
</dbReference>
<dbReference type="Gene3D" id="3.40.190.10">
    <property type="entry name" value="Periplasmic binding protein-like II"/>
    <property type="match status" value="2"/>
</dbReference>
<dbReference type="Gene3D" id="3.30.160.40">
    <property type="entry name" value="Porphobilinogen deaminase, C-terminal domain"/>
    <property type="match status" value="1"/>
</dbReference>
<dbReference type="HAMAP" id="MF_00260">
    <property type="entry name" value="Porphobil_deam"/>
    <property type="match status" value="1"/>
</dbReference>
<dbReference type="InterPro" id="IPR000860">
    <property type="entry name" value="HemC"/>
</dbReference>
<dbReference type="InterPro" id="IPR022419">
    <property type="entry name" value="Porphobilin_deaminase_cofac_BS"/>
</dbReference>
<dbReference type="InterPro" id="IPR022417">
    <property type="entry name" value="Porphobilin_deaminase_N"/>
</dbReference>
<dbReference type="InterPro" id="IPR022418">
    <property type="entry name" value="Porphobilinogen_deaminase_C"/>
</dbReference>
<dbReference type="InterPro" id="IPR036803">
    <property type="entry name" value="Porphobilinogen_deaminase_C_sf"/>
</dbReference>
<dbReference type="NCBIfam" id="TIGR00212">
    <property type="entry name" value="hemC"/>
    <property type="match status" value="1"/>
</dbReference>
<dbReference type="PANTHER" id="PTHR11557">
    <property type="entry name" value="PORPHOBILINOGEN DEAMINASE"/>
    <property type="match status" value="1"/>
</dbReference>
<dbReference type="PANTHER" id="PTHR11557:SF0">
    <property type="entry name" value="PORPHOBILINOGEN DEAMINASE"/>
    <property type="match status" value="1"/>
</dbReference>
<dbReference type="Pfam" id="PF01379">
    <property type="entry name" value="Porphobil_deam"/>
    <property type="match status" value="1"/>
</dbReference>
<dbReference type="Pfam" id="PF03900">
    <property type="entry name" value="Porphobil_deamC"/>
    <property type="match status" value="1"/>
</dbReference>
<dbReference type="PIRSF" id="PIRSF001438">
    <property type="entry name" value="4pyrrol_synth_OHMeBilane_synth"/>
    <property type="match status" value="1"/>
</dbReference>
<dbReference type="PRINTS" id="PR00151">
    <property type="entry name" value="PORPHBDMNASE"/>
</dbReference>
<dbReference type="SUPFAM" id="SSF53850">
    <property type="entry name" value="Periplasmic binding protein-like II"/>
    <property type="match status" value="1"/>
</dbReference>
<dbReference type="SUPFAM" id="SSF54782">
    <property type="entry name" value="Porphobilinogen deaminase (hydroxymethylbilane synthase), C-terminal domain"/>
    <property type="match status" value="1"/>
</dbReference>
<dbReference type="PROSITE" id="PS00533">
    <property type="entry name" value="PORPHOBILINOGEN_DEAM"/>
    <property type="match status" value="1"/>
</dbReference>
<comment type="function">
    <text evidence="1">Tetrapolymerization of the monopyrrole PBG into the hydroxymethylbilane pre-uroporphyrinogen in several discrete steps.</text>
</comment>
<comment type="catalytic activity">
    <reaction evidence="1">
        <text>4 porphobilinogen + H2O = hydroxymethylbilane + 4 NH4(+)</text>
        <dbReference type="Rhea" id="RHEA:13185"/>
        <dbReference type="ChEBI" id="CHEBI:15377"/>
        <dbReference type="ChEBI" id="CHEBI:28938"/>
        <dbReference type="ChEBI" id="CHEBI:57845"/>
        <dbReference type="ChEBI" id="CHEBI:58126"/>
        <dbReference type="EC" id="2.5.1.61"/>
    </reaction>
</comment>
<comment type="cofactor">
    <cofactor evidence="1">
        <name>dipyrromethane</name>
        <dbReference type="ChEBI" id="CHEBI:60342"/>
    </cofactor>
    <text evidence="1">Binds 1 dipyrromethane group covalently.</text>
</comment>
<comment type="pathway">
    <text evidence="1">Porphyrin-containing compound metabolism; protoporphyrin-IX biosynthesis; coproporphyrinogen-III from 5-aminolevulinate: step 2/4.</text>
</comment>
<comment type="subunit">
    <text evidence="1">Monomer.</text>
</comment>
<comment type="miscellaneous">
    <text evidence="1">The porphobilinogen subunits are added to the dipyrromethane group.</text>
</comment>
<comment type="similarity">
    <text evidence="1">Belongs to the HMBS family.</text>
</comment>
<accession>A3D9Q4</accession>
<protein>
    <recommendedName>
        <fullName evidence="1">Porphobilinogen deaminase</fullName>
        <shortName evidence="1">PBG</shortName>
        <ecNumber evidence="1">2.5.1.61</ecNumber>
    </recommendedName>
    <alternativeName>
        <fullName evidence="1">Hydroxymethylbilane synthase</fullName>
        <shortName evidence="1">HMBS</shortName>
    </alternativeName>
    <alternativeName>
        <fullName evidence="1">Pre-uroporphyrinogen synthase</fullName>
    </alternativeName>
</protein>
<feature type="chain" id="PRO_1000047765" description="Porphobilinogen deaminase">
    <location>
        <begin position="1"/>
        <end position="310"/>
    </location>
</feature>
<feature type="modified residue" description="S-(dipyrrolylmethanemethyl)cysteine" evidence="1">
    <location>
        <position position="242"/>
    </location>
</feature>
<name>HEM3_SHEB5</name>
<reference key="1">
    <citation type="submission" date="2007-02" db="EMBL/GenBank/DDBJ databases">
        <title>Complete sequence of chromosome of Shewanella baltica OS155.</title>
        <authorList>
            <consortium name="US DOE Joint Genome Institute"/>
            <person name="Copeland A."/>
            <person name="Lucas S."/>
            <person name="Lapidus A."/>
            <person name="Barry K."/>
            <person name="Detter J.C."/>
            <person name="Glavina del Rio T."/>
            <person name="Hammon N."/>
            <person name="Israni S."/>
            <person name="Dalin E."/>
            <person name="Tice H."/>
            <person name="Pitluck S."/>
            <person name="Sims D.R."/>
            <person name="Brettin T."/>
            <person name="Bruce D."/>
            <person name="Han C."/>
            <person name="Tapia R."/>
            <person name="Brainard J."/>
            <person name="Schmutz J."/>
            <person name="Larimer F."/>
            <person name="Land M."/>
            <person name="Hauser L."/>
            <person name="Kyrpides N."/>
            <person name="Mikhailova N."/>
            <person name="Brettar I."/>
            <person name="Klappenbach J."/>
            <person name="Konstantinidis K."/>
            <person name="Rodrigues J."/>
            <person name="Tiedje J."/>
            <person name="Richardson P."/>
        </authorList>
    </citation>
    <scope>NUCLEOTIDE SEQUENCE [LARGE SCALE GENOMIC DNA]</scope>
    <source>
        <strain>OS155 / ATCC BAA-1091</strain>
    </source>
</reference>
<keyword id="KW-0627">Porphyrin biosynthesis</keyword>
<keyword id="KW-1185">Reference proteome</keyword>
<keyword id="KW-0808">Transferase</keyword>
<organism>
    <name type="scientific">Shewanella baltica (strain OS155 / ATCC BAA-1091)</name>
    <dbReference type="NCBI Taxonomy" id="325240"/>
    <lineage>
        <taxon>Bacteria</taxon>
        <taxon>Pseudomonadati</taxon>
        <taxon>Pseudomonadota</taxon>
        <taxon>Gammaproteobacteria</taxon>
        <taxon>Alteromonadales</taxon>
        <taxon>Shewanellaceae</taxon>
        <taxon>Shewanella</taxon>
    </lineage>
</organism>